<gene>
    <name evidence="3" type="primary">LINC02872</name>
    <name type="synonym">C9orf170</name>
</gene>
<name>CI170_HUMAN</name>
<accession>A2RU37</accession>
<keyword id="KW-1185">Reference proteome</keyword>
<evidence type="ECO:0000256" key="1">
    <source>
        <dbReference type="SAM" id="MobiDB-lite"/>
    </source>
</evidence>
<evidence type="ECO:0000305" key="2"/>
<evidence type="ECO:0000312" key="3">
    <source>
        <dbReference type="HGNC" id="HGNC:33817"/>
    </source>
</evidence>
<feature type="chain" id="PRO_0000348467" description="Uncharacterized protein encoded by LINC02872">
    <location>
        <begin position="1"/>
        <end position="121"/>
    </location>
</feature>
<feature type="region of interest" description="Disordered" evidence="1">
    <location>
        <begin position="24"/>
        <end position="43"/>
    </location>
</feature>
<feature type="region of interest" description="Disordered" evidence="1">
    <location>
        <begin position="100"/>
        <end position="121"/>
    </location>
</feature>
<protein>
    <recommendedName>
        <fullName>Uncharacterized protein encoded by LINC02872</fullName>
    </recommendedName>
    <alternativeName>
        <fullName evidence="3">Long intergenic non-protein coding RNA 2872</fullName>
    </alternativeName>
</protein>
<comment type="caution">
    <text evidence="2">Product of a dubious CDS prediction. May be a non-coding RNA.</text>
</comment>
<sequence>MWSRRGLGVSRAPLHLLLGVWGPSGRTGGQRKGASLARPGRGGLASCSVGANGKRDVLFLRKTLTNTVEDIQIDNFRRKSDLGVGSPDWKNLLIDVTREDHENSQNNSKRRCKVNCETDQR</sequence>
<proteinExistence type="uncertain"/>
<dbReference type="EMBL" id="AK127445">
    <property type="status" value="NOT_ANNOTATED_CDS"/>
    <property type="molecule type" value="mRNA"/>
</dbReference>
<dbReference type="EMBL" id="BC132741">
    <property type="protein sequence ID" value="AAI32742.1"/>
    <property type="molecule type" value="mRNA"/>
</dbReference>
<dbReference type="EMBL" id="BC136791">
    <property type="protein sequence ID" value="AAI36792.1"/>
    <property type="molecule type" value="mRNA"/>
</dbReference>
<dbReference type="RefSeq" id="NP_001001709.1">
    <property type="nucleotide sequence ID" value="NM_001001709.2"/>
</dbReference>
<dbReference type="BioGRID" id="135134">
    <property type="interactions" value="15"/>
</dbReference>
<dbReference type="IntAct" id="A2RU37">
    <property type="interactions" value="14"/>
</dbReference>
<dbReference type="BioMuta" id="HGNC:33817"/>
<dbReference type="PaxDb" id="9606-ENSP00000365108"/>
<dbReference type="ProteomicsDB" id="495"/>
<dbReference type="DNASU" id="401535"/>
<dbReference type="AGR" id="HGNC:33817"/>
<dbReference type="GeneCards" id="LINC02872"/>
<dbReference type="HGNC" id="HGNC:33817">
    <property type="gene designation" value="LINC02872"/>
</dbReference>
<dbReference type="neXtProt" id="NX_A2RU37"/>
<dbReference type="eggNOG" id="ENOG502TE5N">
    <property type="taxonomic scope" value="Eukaryota"/>
</dbReference>
<dbReference type="InParanoid" id="A2RU37"/>
<dbReference type="PAN-GO" id="A2RU37">
    <property type="GO annotations" value="0 GO annotations based on evolutionary models"/>
</dbReference>
<dbReference type="PhylomeDB" id="A2RU37"/>
<dbReference type="PathwayCommons" id="A2RU37"/>
<dbReference type="SignaLink" id="A2RU37"/>
<dbReference type="BioGRID-ORCS" id="401535">
    <property type="hits" value="10 hits in 742 CRISPR screens"/>
</dbReference>
<dbReference type="ChiTaRS" id="C9orf170">
    <property type="organism name" value="human"/>
</dbReference>
<dbReference type="GenomeRNAi" id="401535"/>
<dbReference type="Pharos" id="A2RU37">
    <property type="development level" value="Tdark"/>
</dbReference>
<dbReference type="Proteomes" id="UP000005640">
    <property type="component" value="Unplaced"/>
</dbReference>
<dbReference type="RNAct" id="A2RU37">
    <property type="molecule type" value="protein"/>
</dbReference>
<organism>
    <name type="scientific">Homo sapiens</name>
    <name type="common">Human</name>
    <dbReference type="NCBI Taxonomy" id="9606"/>
    <lineage>
        <taxon>Eukaryota</taxon>
        <taxon>Metazoa</taxon>
        <taxon>Chordata</taxon>
        <taxon>Craniata</taxon>
        <taxon>Vertebrata</taxon>
        <taxon>Euteleostomi</taxon>
        <taxon>Mammalia</taxon>
        <taxon>Eutheria</taxon>
        <taxon>Euarchontoglires</taxon>
        <taxon>Primates</taxon>
        <taxon>Haplorrhini</taxon>
        <taxon>Catarrhini</taxon>
        <taxon>Hominidae</taxon>
        <taxon>Homo</taxon>
    </lineage>
</organism>
<reference key="1">
    <citation type="journal article" date="2004" name="Nat. Genet.">
        <title>Complete sequencing and characterization of 21,243 full-length human cDNAs.</title>
        <authorList>
            <person name="Ota T."/>
            <person name="Suzuki Y."/>
            <person name="Nishikawa T."/>
            <person name="Otsuki T."/>
            <person name="Sugiyama T."/>
            <person name="Irie R."/>
            <person name="Wakamatsu A."/>
            <person name="Hayashi K."/>
            <person name="Sato H."/>
            <person name="Nagai K."/>
            <person name="Kimura K."/>
            <person name="Makita H."/>
            <person name="Sekine M."/>
            <person name="Obayashi M."/>
            <person name="Nishi T."/>
            <person name="Shibahara T."/>
            <person name="Tanaka T."/>
            <person name="Ishii S."/>
            <person name="Yamamoto J."/>
            <person name="Saito K."/>
            <person name="Kawai Y."/>
            <person name="Isono Y."/>
            <person name="Nakamura Y."/>
            <person name="Nagahari K."/>
            <person name="Murakami K."/>
            <person name="Yasuda T."/>
            <person name="Iwayanagi T."/>
            <person name="Wagatsuma M."/>
            <person name="Shiratori A."/>
            <person name="Sudo H."/>
            <person name="Hosoiri T."/>
            <person name="Kaku Y."/>
            <person name="Kodaira H."/>
            <person name="Kondo H."/>
            <person name="Sugawara M."/>
            <person name="Takahashi M."/>
            <person name="Kanda K."/>
            <person name="Yokoi T."/>
            <person name="Furuya T."/>
            <person name="Kikkawa E."/>
            <person name="Omura Y."/>
            <person name="Abe K."/>
            <person name="Kamihara K."/>
            <person name="Katsuta N."/>
            <person name="Sato K."/>
            <person name="Tanikawa M."/>
            <person name="Yamazaki M."/>
            <person name="Ninomiya K."/>
            <person name="Ishibashi T."/>
            <person name="Yamashita H."/>
            <person name="Murakawa K."/>
            <person name="Fujimori K."/>
            <person name="Tanai H."/>
            <person name="Kimata M."/>
            <person name="Watanabe M."/>
            <person name="Hiraoka S."/>
            <person name="Chiba Y."/>
            <person name="Ishida S."/>
            <person name="Ono Y."/>
            <person name="Takiguchi S."/>
            <person name="Watanabe S."/>
            <person name="Yosida M."/>
            <person name="Hotuta T."/>
            <person name="Kusano J."/>
            <person name="Kanehori K."/>
            <person name="Takahashi-Fujii A."/>
            <person name="Hara H."/>
            <person name="Tanase T.-O."/>
            <person name="Nomura Y."/>
            <person name="Togiya S."/>
            <person name="Komai F."/>
            <person name="Hara R."/>
            <person name="Takeuchi K."/>
            <person name="Arita M."/>
            <person name="Imose N."/>
            <person name="Musashino K."/>
            <person name="Yuuki H."/>
            <person name="Oshima A."/>
            <person name="Sasaki N."/>
            <person name="Aotsuka S."/>
            <person name="Yoshikawa Y."/>
            <person name="Matsunawa H."/>
            <person name="Ichihara T."/>
            <person name="Shiohata N."/>
            <person name="Sano S."/>
            <person name="Moriya S."/>
            <person name="Momiyama H."/>
            <person name="Satoh N."/>
            <person name="Takami S."/>
            <person name="Terashima Y."/>
            <person name="Suzuki O."/>
            <person name="Nakagawa S."/>
            <person name="Senoh A."/>
            <person name="Mizoguchi H."/>
            <person name="Goto Y."/>
            <person name="Shimizu F."/>
            <person name="Wakebe H."/>
            <person name="Hishigaki H."/>
            <person name="Watanabe T."/>
            <person name="Sugiyama A."/>
            <person name="Takemoto M."/>
            <person name="Kawakami B."/>
            <person name="Yamazaki M."/>
            <person name="Watanabe K."/>
            <person name="Kumagai A."/>
            <person name="Itakura S."/>
            <person name="Fukuzumi Y."/>
            <person name="Fujimori Y."/>
            <person name="Komiyama M."/>
            <person name="Tashiro H."/>
            <person name="Tanigami A."/>
            <person name="Fujiwara T."/>
            <person name="Ono T."/>
            <person name="Yamada K."/>
            <person name="Fujii Y."/>
            <person name="Ozaki K."/>
            <person name="Hirao M."/>
            <person name="Ohmori Y."/>
            <person name="Kawabata A."/>
            <person name="Hikiji T."/>
            <person name="Kobatake N."/>
            <person name="Inagaki H."/>
            <person name="Ikema Y."/>
            <person name="Okamoto S."/>
            <person name="Okitani R."/>
            <person name="Kawakami T."/>
            <person name="Noguchi S."/>
            <person name="Itoh T."/>
            <person name="Shigeta K."/>
            <person name="Senba T."/>
            <person name="Matsumura K."/>
            <person name="Nakajima Y."/>
            <person name="Mizuno T."/>
            <person name="Morinaga M."/>
            <person name="Sasaki M."/>
            <person name="Togashi T."/>
            <person name="Oyama M."/>
            <person name="Hata H."/>
            <person name="Watanabe M."/>
            <person name="Komatsu T."/>
            <person name="Mizushima-Sugano J."/>
            <person name="Satoh T."/>
            <person name="Shirai Y."/>
            <person name="Takahashi Y."/>
            <person name="Nakagawa K."/>
            <person name="Okumura K."/>
            <person name="Nagase T."/>
            <person name="Nomura N."/>
            <person name="Kikuchi H."/>
            <person name="Masuho Y."/>
            <person name="Yamashita R."/>
            <person name="Nakai K."/>
            <person name="Yada T."/>
            <person name="Nakamura Y."/>
            <person name="Ohara O."/>
            <person name="Isogai T."/>
            <person name="Sugano S."/>
        </authorList>
    </citation>
    <scope>NUCLEOTIDE SEQUENCE [LARGE SCALE MRNA]</scope>
    <source>
        <tissue>Thalamus</tissue>
    </source>
</reference>
<reference key="2">
    <citation type="journal article" date="2004" name="Genome Res.">
        <title>The status, quality, and expansion of the NIH full-length cDNA project: the Mammalian Gene Collection (MGC).</title>
        <authorList>
            <consortium name="The MGC Project Team"/>
        </authorList>
    </citation>
    <scope>NUCLEOTIDE SEQUENCE [LARGE SCALE MRNA]</scope>
    <source>
        <tissue>Brain</tissue>
    </source>
</reference>